<organism>
    <name type="scientific">Homo sapiens</name>
    <name type="common">Human</name>
    <dbReference type="NCBI Taxonomy" id="9606"/>
    <lineage>
        <taxon>Eukaryota</taxon>
        <taxon>Metazoa</taxon>
        <taxon>Chordata</taxon>
        <taxon>Craniata</taxon>
        <taxon>Vertebrata</taxon>
        <taxon>Euteleostomi</taxon>
        <taxon>Mammalia</taxon>
        <taxon>Eutheria</taxon>
        <taxon>Euarchontoglires</taxon>
        <taxon>Primates</taxon>
        <taxon>Haplorrhini</taxon>
        <taxon>Catarrhini</taxon>
        <taxon>Hominidae</taxon>
        <taxon>Homo</taxon>
    </lineage>
</organism>
<sequence length="143" mass="15995">MATPLDNCLRPFPDPMVKVTAETKKISEVSSYVSANNKKNSFWGSGLLYPVALLRCQDCWAGHQTHVLSKEFTSYFSSGAGREAQHQPSAVLGSLIWLRRVYLLRAMVVHGGSQPCQRWLVIRMEVGGHPSFPGHAWLTFHLN</sequence>
<proteinExistence type="evidence at transcript level"/>
<gene>
    <name evidence="2" type="primary">IGF2BP2-AS1</name>
    <name evidence="2" type="synonym">C3orf65</name>
</gene>
<accession>Q96M15</accession>
<feature type="chain" id="PRO_0000263675" description="Putative uncharacterized protein IGF2BP2-AS1">
    <location>
        <begin position="1"/>
        <end position="143"/>
    </location>
</feature>
<name>IFAS1_HUMAN</name>
<evidence type="ECO:0000305" key="1"/>
<evidence type="ECO:0000312" key="2">
    <source>
        <dbReference type="HGNC" id="HGNC:32674"/>
    </source>
</evidence>
<reference key="1">
    <citation type="journal article" date="2004" name="Nat. Genet.">
        <title>Complete sequencing and characterization of 21,243 full-length human cDNAs.</title>
        <authorList>
            <person name="Ota T."/>
            <person name="Suzuki Y."/>
            <person name="Nishikawa T."/>
            <person name="Otsuki T."/>
            <person name="Sugiyama T."/>
            <person name="Irie R."/>
            <person name="Wakamatsu A."/>
            <person name="Hayashi K."/>
            <person name="Sato H."/>
            <person name="Nagai K."/>
            <person name="Kimura K."/>
            <person name="Makita H."/>
            <person name="Sekine M."/>
            <person name="Obayashi M."/>
            <person name="Nishi T."/>
            <person name="Shibahara T."/>
            <person name="Tanaka T."/>
            <person name="Ishii S."/>
            <person name="Yamamoto J."/>
            <person name="Saito K."/>
            <person name="Kawai Y."/>
            <person name="Isono Y."/>
            <person name="Nakamura Y."/>
            <person name="Nagahari K."/>
            <person name="Murakami K."/>
            <person name="Yasuda T."/>
            <person name="Iwayanagi T."/>
            <person name="Wagatsuma M."/>
            <person name="Shiratori A."/>
            <person name="Sudo H."/>
            <person name="Hosoiri T."/>
            <person name="Kaku Y."/>
            <person name="Kodaira H."/>
            <person name="Kondo H."/>
            <person name="Sugawara M."/>
            <person name="Takahashi M."/>
            <person name="Kanda K."/>
            <person name="Yokoi T."/>
            <person name="Furuya T."/>
            <person name="Kikkawa E."/>
            <person name="Omura Y."/>
            <person name="Abe K."/>
            <person name="Kamihara K."/>
            <person name="Katsuta N."/>
            <person name="Sato K."/>
            <person name="Tanikawa M."/>
            <person name="Yamazaki M."/>
            <person name="Ninomiya K."/>
            <person name="Ishibashi T."/>
            <person name="Yamashita H."/>
            <person name="Murakawa K."/>
            <person name="Fujimori K."/>
            <person name="Tanai H."/>
            <person name="Kimata M."/>
            <person name="Watanabe M."/>
            <person name="Hiraoka S."/>
            <person name="Chiba Y."/>
            <person name="Ishida S."/>
            <person name="Ono Y."/>
            <person name="Takiguchi S."/>
            <person name="Watanabe S."/>
            <person name="Yosida M."/>
            <person name="Hotuta T."/>
            <person name="Kusano J."/>
            <person name="Kanehori K."/>
            <person name="Takahashi-Fujii A."/>
            <person name="Hara H."/>
            <person name="Tanase T.-O."/>
            <person name="Nomura Y."/>
            <person name="Togiya S."/>
            <person name="Komai F."/>
            <person name="Hara R."/>
            <person name="Takeuchi K."/>
            <person name="Arita M."/>
            <person name="Imose N."/>
            <person name="Musashino K."/>
            <person name="Yuuki H."/>
            <person name="Oshima A."/>
            <person name="Sasaki N."/>
            <person name="Aotsuka S."/>
            <person name="Yoshikawa Y."/>
            <person name="Matsunawa H."/>
            <person name="Ichihara T."/>
            <person name="Shiohata N."/>
            <person name="Sano S."/>
            <person name="Moriya S."/>
            <person name="Momiyama H."/>
            <person name="Satoh N."/>
            <person name="Takami S."/>
            <person name="Terashima Y."/>
            <person name="Suzuki O."/>
            <person name="Nakagawa S."/>
            <person name="Senoh A."/>
            <person name="Mizoguchi H."/>
            <person name="Goto Y."/>
            <person name="Shimizu F."/>
            <person name="Wakebe H."/>
            <person name="Hishigaki H."/>
            <person name="Watanabe T."/>
            <person name="Sugiyama A."/>
            <person name="Takemoto M."/>
            <person name="Kawakami B."/>
            <person name="Yamazaki M."/>
            <person name="Watanabe K."/>
            <person name="Kumagai A."/>
            <person name="Itakura S."/>
            <person name="Fukuzumi Y."/>
            <person name="Fujimori Y."/>
            <person name="Komiyama M."/>
            <person name="Tashiro H."/>
            <person name="Tanigami A."/>
            <person name="Fujiwara T."/>
            <person name="Ono T."/>
            <person name="Yamada K."/>
            <person name="Fujii Y."/>
            <person name="Ozaki K."/>
            <person name="Hirao M."/>
            <person name="Ohmori Y."/>
            <person name="Kawabata A."/>
            <person name="Hikiji T."/>
            <person name="Kobatake N."/>
            <person name="Inagaki H."/>
            <person name="Ikema Y."/>
            <person name="Okamoto S."/>
            <person name="Okitani R."/>
            <person name="Kawakami T."/>
            <person name="Noguchi S."/>
            <person name="Itoh T."/>
            <person name="Shigeta K."/>
            <person name="Senba T."/>
            <person name="Matsumura K."/>
            <person name="Nakajima Y."/>
            <person name="Mizuno T."/>
            <person name="Morinaga M."/>
            <person name="Sasaki M."/>
            <person name="Togashi T."/>
            <person name="Oyama M."/>
            <person name="Hata H."/>
            <person name="Watanabe M."/>
            <person name="Komatsu T."/>
            <person name="Mizushima-Sugano J."/>
            <person name="Satoh T."/>
            <person name="Shirai Y."/>
            <person name="Takahashi Y."/>
            <person name="Nakagawa K."/>
            <person name="Okumura K."/>
            <person name="Nagase T."/>
            <person name="Nomura N."/>
            <person name="Kikuchi H."/>
            <person name="Masuho Y."/>
            <person name="Yamashita R."/>
            <person name="Nakai K."/>
            <person name="Yada T."/>
            <person name="Nakamura Y."/>
            <person name="Ohara O."/>
            <person name="Isogai T."/>
            <person name="Sugano S."/>
        </authorList>
    </citation>
    <scope>NUCLEOTIDE SEQUENCE [LARGE SCALE MRNA]</scope>
    <source>
        <tissue>Testis</tissue>
    </source>
</reference>
<reference key="2">
    <citation type="journal article" date="2006" name="Nature">
        <title>The DNA sequence, annotation and analysis of human chromosome 3.</title>
        <authorList>
            <person name="Muzny D.M."/>
            <person name="Scherer S.E."/>
            <person name="Kaul R."/>
            <person name="Wang J."/>
            <person name="Yu J."/>
            <person name="Sudbrak R."/>
            <person name="Buhay C.J."/>
            <person name="Chen R."/>
            <person name="Cree A."/>
            <person name="Ding Y."/>
            <person name="Dugan-Rocha S."/>
            <person name="Gill R."/>
            <person name="Gunaratne P."/>
            <person name="Harris R.A."/>
            <person name="Hawes A.C."/>
            <person name="Hernandez J."/>
            <person name="Hodgson A.V."/>
            <person name="Hume J."/>
            <person name="Jackson A."/>
            <person name="Khan Z.M."/>
            <person name="Kovar-Smith C."/>
            <person name="Lewis L.R."/>
            <person name="Lozado R.J."/>
            <person name="Metzker M.L."/>
            <person name="Milosavljevic A."/>
            <person name="Miner G.R."/>
            <person name="Morgan M.B."/>
            <person name="Nazareth L.V."/>
            <person name="Scott G."/>
            <person name="Sodergren E."/>
            <person name="Song X.-Z."/>
            <person name="Steffen D."/>
            <person name="Wei S."/>
            <person name="Wheeler D.A."/>
            <person name="Wright M.W."/>
            <person name="Worley K.C."/>
            <person name="Yuan Y."/>
            <person name="Zhang Z."/>
            <person name="Adams C.Q."/>
            <person name="Ansari-Lari M.A."/>
            <person name="Ayele M."/>
            <person name="Brown M.J."/>
            <person name="Chen G."/>
            <person name="Chen Z."/>
            <person name="Clendenning J."/>
            <person name="Clerc-Blankenburg K.P."/>
            <person name="Chen R."/>
            <person name="Chen Z."/>
            <person name="Davis C."/>
            <person name="Delgado O."/>
            <person name="Dinh H.H."/>
            <person name="Dong W."/>
            <person name="Draper H."/>
            <person name="Ernst S."/>
            <person name="Fu G."/>
            <person name="Gonzalez-Garay M.L."/>
            <person name="Garcia D.K."/>
            <person name="Gillett W."/>
            <person name="Gu J."/>
            <person name="Hao B."/>
            <person name="Haugen E."/>
            <person name="Havlak P."/>
            <person name="He X."/>
            <person name="Hennig S."/>
            <person name="Hu S."/>
            <person name="Huang W."/>
            <person name="Jackson L.R."/>
            <person name="Jacob L.S."/>
            <person name="Kelly S.H."/>
            <person name="Kube M."/>
            <person name="Levy R."/>
            <person name="Li Z."/>
            <person name="Liu B."/>
            <person name="Liu J."/>
            <person name="Liu W."/>
            <person name="Lu J."/>
            <person name="Maheshwari M."/>
            <person name="Nguyen B.-V."/>
            <person name="Okwuonu G.O."/>
            <person name="Palmeiri A."/>
            <person name="Pasternak S."/>
            <person name="Perez L.M."/>
            <person name="Phelps K.A."/>
            <person name="Plopper F.J."/>
            <person name="Qiang B."/>
            <person name="Raymond C."/>
            <person name="Rodriguez R."/>
            <person name="Saenphimmachak C."/>
            <person name="Santibanez J."/>
            <person name="Shen H."/>
            <person name="Shen Y."/>
            <person name="Subramanian S."/>
            <person name="Tabor P.E."/>
            <person name="Verduzco D."/>
            <person name="Waldron L."/>
            <person name="Wang J."/>
            <person name="Wang J."/>
            <person name="Wang Q."/>
            <person name="Williams G.A."/>
            <person name="Wong G.K.-S."/>
            <person name="Yao Z."/>
            <person name="Zhang J."/>
            <person name="Zhang X."/>
            <person name="Zhao G."/>
            <person name="Zhou J."/>
            <person name="Zhou Y."/>
            <person name="Nelson D."/>
            <person name="Lehrach H."/>
            <person name="Reinhardt R."/>
            <person name="Naylor S.L."/>
            <person name="Yang H."/>
            <person name="Olson M."/>
            <person name="Weinstock G."/>
            <person name="Gibbs R.A."/>
        </authorList>
    </citation>
    <scope>NUCLEOTIDE SEQUENCE [LARGE SCALE GENOMIC DNA]</scope>
</reference>
<dbReference type="EMBL" id="AK057462">
    <property type="protein sequence ID" value="BAB71499.1"/>
    <property type="molecule type" value="mRNA"/>
</dbReference>
<dbReference type="EMBL" id="AC016961">
    <property type="status" value="NOT_ANNOTATED_CDS"/>
    <property type="molecule type" value="Genomic_DNA"/>
</dbReference>
<dbReference type="GlyGen" id="Q96M15">
    <property type="glycosylation" value="1 site, 1 O-linked glycan (1 site)"/>
</dbReference>
<dbReference type="BioMuta" id="HGNC:32674"/>
<dbReference type="DMDM" id="74732281"/>
<dbReference type="AGR" id="HGNC:32674"/>
<dbReference type="GeneCards" id="IGF2BP2-AS1"/>
<dbReference type="HGNC" id="HGNC:32674">
    <property type="gene designation" value="IGF2BP2-AS1"/>
</dbReference>
<dbReference type="neXtProt" id="NX_Q96M15"/>
<dbReference type="InParanoid" id="Q96M15"/>
<dbReference type="PAN-GO" id="Q96M15">
    <property type="GO annotations" value="0 GO annotations based on evolutionary models"/>
</dbReference>
<dbReference type="PhylomeDB" id="Q96M15"/>
<dbReference type="TreeFam" id="TF342277"/>
<dbReference type="Pharos" id="Q96M15">
    <property type="development level" value="Tdark"/>
</dbReference>
<dbReference type="PRO" id="PR:Q96M15"/>
<dbReference type="Proteomes" id="UP000005640">
    <property type="component" value="Unplaced"/>
</dbReference>
<dbReference type="RNAct" id="Q96M15">
    <property type="molecule type" value="protein"/>
</dbReference>
<keyword id="KW-1185">Reference proteome</keyword>
<protein>
    <recommendedName>
        <fullName evidence="2">Putative uncharacterized protein IGF2BP2-AS1</fullName>
    </recommendedName>
    <alternativeName>
        <fullName evidence="2">IGF2BP2 antisense RNA 1</fullName>
    </alternativeName>
    <alternativeName>
        <fullName evidence="1">IGF2BP2 antisense gene protein 1</fullName>
    </alternativeName>
</protein>